<name>LEUC_RHIR8</name>
<feature type="chain" id="PRO_1000149346" description="3-isopropylmalate dehydratase large subunit">
    <location>
        <begin position="1"/>
        <end position="469"/>
    </location>
</feature>
<feature type="binding site" evidence="1">
    <location>
        <position position="350"/>
    </location>
    <ligand>
        <name>[4Fe-4S] cluster</name>
        <dbReference type="ChEBI" id="CHEBI:49883"/>
    </ligand>
</feature>
<feature type="binding site" evidence="1">
    <location>
        <position position="410"/>
    </location>
    <ligand>
        <name>[4Fe-4S] cluster</name>
        <dbReference type="ChEBI" id="CHEBI:49883"/>
    </ligand>
</feature>
<feature type="binding site" evidence="1">
    <location>
        <position position="413"/>
    </location>
    <ligand>
        <name>[4Fe-4S] cluster</name>
        <dbReference type="ChEBI" id="CHEBI:49883"/>
    </ligand>
</feature>
<comment type="function">
    <text evidence="1">Catalyzes the isomerization between 2-isopropylmalate and 3-isopropylmalate, via the formation of 2-isopropylmaleate.</text>
</comment>
<comment type="catalytic activity">
    <reaction evidence="1">
        <text>(2R,3S)-3-isopropylmalate = (2S)-2-isopropylmalate</text>
        <dbReference type="Rhea" id="RHEA:32287"/>
        <dbReference type="ChEBI" id="CHEBI:1178"/>
        <dbReference type="ChEBI" id="CHEBI:35121"/>
        <dbReference type="EC" id="4.2.1.33"/>
    </reaction>
</comment>
<comment type="cofactor">
    <cofactor evidence="1">
        <name>[4Fe-4S] cluster</name>
        <dbReference type="ChEBI" id="CHEBI:49883"/>
    </cofactor>
    <text evidence="1">Binds 1 [4Fe-4S] cluster per subunit.</text>
</comment>
<comment type="pathway">
    <text evidence="1">Amino-acid biosynthesis; L-leucine biosynthesis; L-leucine from 3-methyl-2-oxobutanoate: step 2/4.</text>
</comment>
<comment type="subunit">
    <text evidence="1">Heterodimer of LeuC and LeuD.</text>
</comment>
<comment type="similarity">
    <text evidence="1">Belongs to the aconitase/IPM isomerase family. LeuC type 1 subfamily.</text>
</comment>
<sequence length="469" mass="50650">MSAPRTLYDKIWDDHLVDSQDDGTCLLYIDRHLVHEVTSPQAFEGLRMTGRKVRAPEKTLAVVDHNVPTSPDRHLGIKNEESRIQVEALATNAAEFGVQYYSASDKRQGIVHIIGPEQGFTLPGMTIVCGDSHTSTHGAFGSLAHGIGTSEVEHVLATQTLIQKKAKNMLVRVDGQLPAGVTAKDIILAIIGEIGTAGGTGYVIEYAGEAIRALSMEGRMTICNMSIEGGARAGLIAPDETTFEYIKGKPRSPTGEALEQAIAYWKTLQTDEGAHYDRVVVLDAAALPPIVSWGSSPEDVVSVQGIVPNPDEIQDENKRTSKWRALDYMGLKPGTPMTEINIDRVFIGSCTNGRIEDLRAVAKVVEGKTVASTVDAMIVPGSGLVKEQAEAEGLDKIFKAAGFDWREPGCSMCLAMNDDRLKPGERCASTSNRNFEGRQGFKGRTHLVSPAMAAAAAIAGHFVDIREWN</sequence>
<proteinExistence type="inferred from homology"/>
<accession>B9JCN5</accession>
<reference key="1">
    <citation type="journal article" date="2009" name="J. Bacteriol.">
        <title>Genome sequences of three Agrobacterium biovars help elucidate the evolution of multichromosome genomes in bacteria.</title>
        <authorList>
            <person name="Slater S.C."/>
            <person name="Goldman B.S."/>
            <person name="Goodner B."/>
            <person name="Setubal J.C."/>
            <person name="Farrand S.K."/>
            <person name="Nester E.W."/>
            <person name="Burr T.J."/>
            <person name="Banta L."/>
            <person name="Dickerman A.W."/>
            <person name="Paulsen I."/>
            <person name="Otten L."/>
            <person name="Suen G."/>
            <person name="Welch R."/>
            <person name="Almeida N.F."/>
            <person name="Arnold F."/>
            <person name="Burton O.T."/>
            <person name="Du Z."/>
            <person name="Ewing A."/>
            <person name="Godsy E."/>
            <person name="Heisel S."/>
            <person name="Houmiel K.L."/>
            <person name="Jhaveri J."/>
            <person name="Lu J."/>
            <person name="Miller N.M."/>
            <person name="Norton S."/>
            <person name="Chen Q."/>
            <person name="Phoolcharoen W."/>
            <person name="Ohlin V."/>
            <person name="Ondrusek D."/>
            <person name="Pride N."/>
            <person name="Stricklin S.L."/>
            <person name="Sun J."/>
            <person name="Wheeler C."/>
            <person name="Wilson L."/>
            <person name="Zhu H."/>
            <person name="Wood D.W."/>
        </authorList>
    </citation>
    <scope>NUCLEOTIDE SEQUENCE [LARGE SCALE GENOMIC DNA]</scope>
    <source>
        <strain>K84 / ATCC BAA-868</strain>
    </source>
</reference>
<organism>
    <name type="scientific">Rhizobium rhizogenes (strain K84 / ATCC BAA-868)</name>
    <name type="common">Agrobacterium radiobacter</name>
    <dbReference type="NCBI Taxonomy" id="311403"/>
    <lineage>
        <taxon>Bacteria</taxon>
        <taxon>Pseudomonadati</taxon>
        <taxon>Pseudomonadota</taxon>
        <taxon>Alphaproteobacteria</taxon>
        <taxon>Hyphomicrobiales</taxon>
        <taxon>Rhizobiaceae</taxon>
        <taxon>Rhizobium/Agrobacterium group</taxon>
        <taxon>Rhizobium</taxon>
    </lineage>
</organism>
<evidence type="ECO:0000255" key="1">
    <source>
        <dbReference type="HAMAP-Rule" id="MF_01026"/>
    </source>
</evidence>
<keyword id="KW-0004">4Fe-4S</keyword>
<keyword id="KW-0028">Amino-acid biosynthesis</keyword>
<keyword id="KW-0100">Branched-chain amino acid biosynthesis</keyword>
<keyword id="KW-0408">Iron</keyword>
<keyword id="KW-0411">Iron-sulfur</keyword>
<keyword id="KW-0432">Leucine biosynthesis</keyword>
<keyword id="KW-0456">Lyase</keyword>
<keyword id="KW-0479">Metal-binding</keyword>
<dbReference type="EC" id="4.2.1.33" evidence="1"/>
<dbReference type="EMBL" id="CP000628">
    <property type="protein sequence ID" value="ACM28146.1"/>
    <property type="molecule type" value="Genomic_DNA"/>
</dbReference>
<dbReference type="RefSeq" id="WP_012652729.1">
    <property type="nucleotide sequence ID" value="NC_011985.1"/>
</dbReference>
<dbReference type="SMR" id="B9JCN5"/>
<dbReference type="STRING" id="311403.Arad_4434"/>
<dbReference type="KEGG" id="ara:Arad_4434"/>
<dbReference type="eggNOG" id="COG0065">
    <property type="taxonomic scope" value="Bacteria"/>
</dbReference>
<dbReference type="HOGENOM" id="CLU_006714_3_4_5"/>
<dbReference type="UniPathway" id="UPA00048">
    <property type="reaction ID" value="UER00071"/>
</dbReference>
<dbReference type="Proteomes" id="UP000001600">
    <property type="component" value="Chromosome 1"/>
</dbReference>
<dbReference type="GO" id="GO:0003861">
    <property type="term" value="F:3-isopropylmalate dehydratase activity"/>
    <property type="evidence" value="ECO:0007669"/>
    <property type="project" value="UniProtKB-UniRule"/>
</dbReference>
<dbReference type="GO" id="GO:0051539">
    <property type="term" value="F:4 iron, 4 sulfur cluster binding"/>
    <property type="evidence" value="ECO:0007669"/>
    <property type="project" value="UniProtKB-KW"/>
</dbReference>
<dbReference type="GO" id="GO:0046872">
    <property type="term" value="F:metal ion binding"/>
    <property type="evidence" value="ECO:0007669"/>
    <property type="project" value="UniProtKB-KW"/>
</dbReference>
<dbReference type="GO" id="GO:0009098">
    <property type="term" value="P:L-leucine biosynthetic process"/>
    <property type="evidence" value="ECO:0007669"/>
    <property type="project" value="UniProtKB-UniRule"/>
</dbReference>
<dbReference type="CDD" id="cd01583">
    <property type="entry name" value="IPMI"/>
    <property type="match status" value="1"/>
</dbReference>
<dbReference type="FunFam" id="3.30.499.10:FF:000006">
    <property type="entry name" value="3-isopropylmalate dehydratase large subunit"/>
    <property type="match status" value="1"/>
</dbReference>
<dbReference type="FunFam" id="3.30.499.10:FF:000007">
    <property type="entry name" value="3-isopropylmalate dehydratase large subunit"/>
    <property type="match status" value="1"/>
</dbReference>
<dbReference type="Gene3D" id="3.30.499.10">
    <property type="entry name" value="Aconitase, domain 3"/>
    <property type="match status" value="2"/>
</dbReference>
<dbReference type="HAMAP" id="MF_01026">
    <property type="entry name" value="LeuC_type1"/>
    <property type="match status" value="1"/>
</dbReference>
<dbReference type="InterPro" id="IPR004430">
    <property type="entry name" value="3-IsopropMal_deHydase_lsu"/>
</dbReference>
<dbReference type="InterPro" id="IPR015931">
    <property type="entry name" value="Acnase/IPM_dHydase_lsu_aba_1/3"/>
</dbReference>
<dbReference type="InterPro" id="IPR001030">
    <property type="entry name" value="Acoase/IPM_deHydtase_lsu_aba"/>
</dbReference>
<dbReference type="InterPro" id="IPR018136">
    <property type="entry name" value="Aconitase_4Fe-4S_BS"/>
</dbReference>
<dbReference type="InterPro" id="IPR036008">
    <property type="entry name" value="Aconitase_4Fe-4S_dom"/>
</dbReference>
<dbReference type="InterPro" id="IPR050067">
    <property type="entry name" value="IPM_dehydratase_rel_enz"/>
</dbReference>
<dbReference type="InterPro" id="IPR033941">
    <property type="entry name" value="IPMI_cat"/>
</dbReference>
<dbReference type="NCBIfam" id="TIGR00170">
    <property type="entry name" value="leuC"/>
    <property type="match status" value="1"/>
</dbReference>
<dbReference type="NCBIfam" id="NF004016">
    <property type="entry name" value="PRK05478.1"/>
    <property type="match status" value="1"/>
</dbReference>
<dbReference type="NCBIfam" id="NF009116">
    <property type="entry name" value="PRK12466.1"/>
    <property type="match status" value="1"/>
</dbReference>
<dbReference type="PANTHER" id="PTHR43822:SF9">
    <property type="entry name" value="3-ISOPROPYLMALATE DEHYDRATASE"/>
    <property type="match status" value="1"/>
</dbReference>
<dbReference type="PANTHER" id="PTHR43822">
    <property type="entry name" value="HOMOACONITASE, MITOCHONDRIAL-RELATED"/>
    <property type="match status" value="1"/>
</dbReference>
<dbReference type="Pfam" id="PF00330">
    <property type="entry name" value="Aconitase"/>
    <property type="match status" value="1"/>
</dbReference>
<dbReference type="PRINTS" id="PR00415">
    <property type="entry name" value="ACONITASE"/>
</dbReference>
<dbReference type="SUPFAM" id="SSF53732">
    <property type="entry name" value="Aconitase iron-sulfur domain"/>
    <property type="match status" value="1"/>
</dbReference>
<dbReference type="PROSITE" id="PS00450">
    <property type="entry name" value="ACONITASE_1"/>
    <property type="match status" value="1"/>
</dbReference>
<dbReference type="PROSITE" id="PS01244">
    <property type="entry name" value="ACONITASE_2"/>
    <property type="match status" value="1"/>
</dbReference>
<protein>
    <recommendedName>
        <fullName evidence="1">3-isopropylmalate dehydratase large subunit</fullName>
        <ecNumber evidence="1">4.2.1.33</ecNumber>
    </recommendedName>
    <alternativeName>
        <fullName evidence="1">Alpha-IPM isomerase</fullName>
        <shortName evidence="1">IPMI</shortName>
    </alternativeName>
    <alternativeName>
        <fullName evidence="1">Isopropylmalate isomerase</fullName>
    </alternativeName>
</protein>
<gene>
    <name evidence="1" type="primary">leuC</name>
    <name type="ordered locus">Arad_4434</name>
</gene>